<evidence type="ECO:0000250" key="1">
    <source>
        <dbReference type="UniProtKB" id="I6L8L6"/>
    </source>
</evidence>
<evidence type="ECO:0000250" key="2">
    <source>
        <dbReference type="UniProtKB" id="P24605"/>
    </source>
</evidence>
<evidence type="ECO:0000269" key="3">
    <source>
    </source>
</evidence>
<evidence type="ECO:0000269" key="4">
    <source>
    </source>
</evidence>
<evidence type="ECO:0000269" key="5">
    <source>
    </source>
</evidence>
<evidence type="ECO:0000269" key="6">
    <source>
    </source>
</evidence>
<evidence type="ECO:0000269" key="7">
    <source>
    </source>
</evidence>
<evidence type="ECO:0000269" key="8">
    <source>
    </source>
</evidence>
<evidence type="ECO:0000303" key="9">
    <source>
    </source>
</evidence>
<evidence type="ECO:0000303" key="10">
    <source>
    </source>
</evidence>
<evidence type="ECO:0000303" key="11">
    <source>
    </source>
</evidence>
<evidence type="ECO:0000305" key="12"/>
<evidence type="ECO:0000305" key="13">
    <source>
    </source>
</evidence>
<evidence type="ECO:0000305" key="14">
    <source>
    </source>
</evidence>
<evidence type="ECO:0000312" key="15">
    <source>
        <dbReference type="PDB" id="1PA0"/>
    </source>
</evidence>
<evidence type="ECO:0000312" key="16">
    <source>
        <dbReference type="PDB" id="1PC9"/>
    </source>
</evidence>
<evidence type="ECO:0000312" key="17">
    <source>
        <dbReference type="PDB" id="3MLM"/>
    </source>
</evidence>
<evidence type="ECO:0000312" key="18">
    <source>
        <dbReference type="PDB" id="5VFH"/>
    </source>
</evidence>
<evidence type="ECO:0000312" key="19">
    <source>
        <dbReference type="PDB" id="5VFJ"/>
    </source>
</evidence>
<evidence type="ECO:0000312" key="20">
    <source>
        <dbReference type="PDB" id="5VFM"/>
    </source>
</evidence>
<evidence type="ECO:0000312" key="21">
    <source>
        <dbReference type="PDB" id="5VFN"/>
    </source>
</evidence>
<evidence type="ECO:0007744" key="22">
    <source>
        <dbReference type="PDB" id="1PA0"/>
    </source>
</evidence>
<evidence type="ECO:0007744" key="23">
    <source>
        <dbReference type="PDB" id="1PC9"/>
    </source>
</evidence>
<evidence type="ECO:0007744" key="24">
    <source>
        <dbReference type="PDB" id="3MLM"/>
    </source>
</evidence>
<evidence type="ECO:0007744" key="25">
    <source>
        <dbReference type="PDB" id="5VFH"/>
    </source>
</evidence>
<evidence type="ECO:0007829" key="26">
    <source>
        <dbReference type="PDB" id="5VFH"/>
    </source>
</evidence>
<accession>Q9IAT9</accession>
<feature type="chain" id="PRO_0000161625" description="Basic phospholipase A2 homolog BnSP-7" evidence="13">
    <location>
        <begin position="1"/>
        <end position="121"/>
    </location>
</feature>
<feature type="region of interest" description="Important for membrane-damaging activities in eukaryotes and bacteria; heparin-binding" evidence="2">
    <location>
        <begin position="105"/>
        <end position="117"/>
    </location>
</feature>
<feature type="site" description="Cationic membrane-docking site (MDoS)" evidence="14">
    <location>
        <position position="16"/>
    </location>
</feature>
<feature type="site" description="Cationic membrane-docking site (MDoS)" evidence="1 14">
    <location>
        <position position="19"/>
    </location>
</feature>
<feature type="site" description="Important residue of the cationic membrane-docking site (MDoS)" evidence="1 14">
    <location>
        <position position="105"/>
    </location>
</feature>
<feature type="site" description="Important residue of the cationic membrane-docking site (MDoS)" evidence="1 14">
    <location>
        <position position="108"/>
    </location>
</feature>
<feature type="site" description="Hydrophobic membrane-disruption site (MDiS)" evidence="1 14">
    <location>
        <position position="111"/>
    </location>
</feature>
<feature type="site" description="Hydrophobic membrane-disruption site (MDiS)" evidence="1 14">
    <location>
        <position position="114"/>
    </location>
</feature>
<feature type="disulfide bond" evidence="4 6 7 22 23 24 25">
    <location>
        <begin position="26"/>
        <end position="115"/>
    </location>
</feature>
<feature type="disulfide bond" evidence="4 6 7 22 23 24 25">
    <location>
        <begin position="28"/>
        <end position="44"/>
    </location>
</feature>
<feature type="disulfide bond" evidence="4 6 7 22 23 24 25">
    <location>
        <begin position="43"/>
        <end position="95"/>
    </location>
</feature>
<feature type="disulfide bond" evidence="4 6 7 22 23 24 25">
    <location>
        <begin position="49"/>
        <end position="121"/>
    </location>
</feature>
<feature type="disulfide bond" evidence="4 6 7 22 23 24 25">
    <location>
        <begin position="50"/>
        <end position="88"/>
    </location>
</feature>
<feature type="disulfide bond" evidence="4 6 7 22 23 24 25">
    <location>
        <begin position="57"/>
        <end position="81"/>
    </location>
</feature>
<feature type="disulfide bond" evidence="4 6 7 22 23 24 25">
    <location>
        <begin position="75"/>
        <end position="86"/>
    </location>
</feature>
<feature type="sequence variant" description="In BnSP-6 and Bn-IV." evidence="4 6">
    <original>Q</original>
    <variation>G</variation>
    <location>
        <position position="35"/>
    </location>
</feature>
<feature type="sequence variant" description="In Bn-IV." evidence="6">
    <original>L</original>
    <variation>I</variation>
    <location>
        <position position="54"/>
    </location>
</feature>
<feature type="sequence conflict" description="In Ref. 1; AA sequence." evidence="13" ref="1">
    <location>
        <position position="2"/>
    </location>
</feature>
<feature type="helix" evidence="26">
    <location>
        <begin position="3"/>
        <end position="13"/>
    </location>
</feature>
<feature type="helix" evidence="26">
    <location>
        <begin position="17"/>
        <end position="21"/>
    </location>
</feature>
<feature type="turn" evidence="26">
    <location>
        <begin position="25"/>
        <end position="27"/>
    </location>
</feature>
<feature type="strand" evidence="26">
    <location>
        <begin position="28"/>
        <end position="31"/>
    </location>
</feature>
<feature type="helix" evidence="26">
    <location>
        <begin position="39"/>
        <end position="52"/>
    </location>
</feature>
<feature type="turn" evidence="26">
    <location>
        <begin position="59"/>
        <end position="61"/>
    </location>
</feature>
<feature type="strand" evidence="26">
    <location>
        <begin position="66"/>
        <end position="68"/>
    </location>
</feature>
<feature type="strand" evidence="26">
    <location>
        <begin position="73"/>
        <end position="75"/>
    </location>
</feature>
<feature type="helix" evidence="26">
    <location>
        <begin position="80"/>
        <end position="98"/>
    </location>
</feature>
<feature type="helix" evidence="26">
    <location>
        <begin position="99"/>
        <end position="102"/>
    </location>
</feature>
<feature type="helix" evidence="26">
    <location>
        <begin position="105"/>
        <end position="107"/>
    </location>
</feature>
<feature type="helix" evidence="26">
    <location>
        <begin position="112"/>
        <end position="114"/>
    </location>
</feature>
<organism>
    <name type="scientific">Bothrops pauloensis</name>
    <name type="common">Neuwied's lancehead</name>
    <name type="synonym">Bothrops neuwiedi pauloensis</name>
    <dbReference type="NCBI Taxonomy" id="1042543"/>
    <lineage>
        <taxon>Eukaryota</taxon>
        <taxon>Metazoa</taxon>
        <taxon>Chordata</taxon>
        <taxon>Craniata</taxon>
        <taxon>Vertebrata</taxon>
        <taxon>Euteleostomi</taxon>
        <taxon>Lepidosauria</taxon>
        <taxon>Squamata</taxon>
        <taxon>Bifurcata</taxon>
        <taxon>Unidentata</taxon>
        <taxon>Episquamata</taxon>
        <taxon>Toxicofera</taxon>
        <taxon>Serpentes</taxon>
        <taxon>Colubroidea</taxon>
        <taxon>Viperidae</taxon>
        <taxon>Crotalinae</taxon>
        <taxon>Bothrops</taxon>
    </lineage>
</organism>
<protein>
    <recommendedName>
        <fullName evidence="9 10 11">Basic phospholipase A2 homolog BnSP-7</fullName>
        <shortName>svPLA2 homolog</shortName>
    </recommendedName>
    <alternativeName>
        <fullName>Phospholipase A2 II</fullName>
    </alternativeName>
</protein>
<dbReference type="EMBL" id="AF145781">
    <property type="protein sequence ID" value="AAF66703.1"/>
    <property type="molecule type" value="mRNA"/>
</dbReference>
<dbReference type="PDB" id="1PA0">
    <property type="method" value="X-ray"/>
    <property type="resolution" value="2.20 A"/>
    <property type="chains" value="A/B=1-121"/>
</dbReference>
<dbReference type="PDB" id="1PC9">
    <property type="method" value="X-ray"/>
    <property type="resolution" value="2.50 A"/>
    <property type="chains" value="A/B=1-121"/>
</dbReference>
<dbReference type="PDB" id="3MLM">
    <property type="method" value="X-ray"/>
    <property type="resolution" value="2.21 A"/>
    <property type="chains" value="A/B=1-121"/>
</dbReference>
<dbReference type="PDB" id="5VFH">
    <property type="method" value="X-ray"/>
    <property type="resolution" value="1.59 A"/>
    <property type="chains" value="A/B=1-121"/>
</dbReference>
<dbReference type="PDB" id="5VFJ">
    <property type="method" value="X-ray"/>
    <property type="resolution" value="2.08 A"/>
    <property type="chains" value="A/B=1-121"/>
</dbReference>
<dbReference type="PDB" id="5VFM">
    <property type="method" value="X-ray"/>
    <property type="resolution" value="2.06 A"/>
    <property type="chains" value="A/B=1-121"/>
</dbReference>
<dbReference type="PDB" id="5VFN">
    <property type="method" value="X-ray"/>
    <property type="resolution" value="2.39 A"/>
    <property type="chains" value="A/B=1-121"/>
</dbReference>
<dbReference type="PDBsum" id="1PA0"/>
<dbReference type="PDBsum" id="1PC9"/>
<dbReference type="PDBsum" id="3MLM"/>
<dbReference type="PDBsum" id="5VFH"/>
<dbReference type="PDBsum" id="5VFJ"/>
<dbReference type="PDBsum" id="5VFM"/>
<dbReference type="PDBsum" id="5VFN"/>
<dbReference type="SMR" id="Q9IAT9"/>
<dbReference type="ChEMBL" id="CHEMBL2146345"/>
<dbReference type="EvolutionaryTrace" id="Q9IAT9"/>
<dbReference type="GO" id="GO:0005576">
    <property type="term" value="C:extracellular region"/>
    <property type="evidence" value="ECO:0007669"/>
    <property type="project" value="UniProtKB-SubCell"/>
</dbReference>
<dbReference type="GO" id="GO:0005509">
    <property type="term" value="F:calcium ion binding"/>
    <property type="evidence" value="ECO:0007669"/>
    <property type="project" value="InterPro"/>
</dbReference>
<dbReference type="GO" id="GO:0047498">
    <property type="term" value="F:calcium-dependent phospholipase A2 activity"/>
    <property type="evidence" value="ECO:0007669"/>
    <property type="project" value="TreeGrafter"/>
</dbReference>
<dbReference type="GO" id="GO:0005543">
    <property type="term" value="F:phospholipid binding"/>
    <property type="evidence" value="ECO:0007669"/>
    <property type="project" value="TreeGrafter"/>
</dbReference>
<dbReference type="GO" id="GO:0090729">
    <property type="term" value="F:toxin activity"/>
    <property type="evidence" value="ECO:0007669"/>
    <property type="project" value="UniProtKB-KW"/>
</dbReference>
<dbReference type="GO" id="GO:0050482">
    <property type="term" value="P:arachidonate secretion"/>
    <property type="evidence" value="ECO:0007669"/>
    <property type="project" value="InterPro"/>
</dbReference>
<dbReference type="GO" id="GO:0042742">
    <property type="term" value="P:defense response to bacterium"/>
    <property type="evidence" value="ECO:0007669"/>
    <property type="project" value="UniProtKB-KW"/>
</dbReference>
<dbReference type="GO" id="GO:0016042">
    <property type="term" value="P:lipid catabolic process"/>
    <property type="evidence" value="ECO:0007669"/>
    <property type="project" value="InterPro"/>
</dbReference>
<dbReference type="GO" id="GO:0042130">
    <property type="term" value="P:negative regulation of T cell proliferation"/>
    <property type="evidence" value="ECO:0007669"/>
    <property type="project" value="TreeGrafter"/>
</dbReference>
<dbReference type="GO" id="GO:0006644">
    <property type="term" value="P:phospholipid metabolic process"/>
    <property type="evidence" value="ECO:0007669"/>
    <property type="project" value="InterPro"/>
</dbReference>
<dbReference type="CDD" id="cd00125">
    <property type="entry name" value="PLA2c"/>
    <property type="match status" value="1"/>
</dbReference>
<dbReference type="FunFam" id="1.20.90.10:FF:000001">
    <property type="entry name" value="Basic phospholipase A2 homolog"/>
    <property type="match status" value="1"/>
</dbReference>
<dbReference type="Gene3D" id="1.20.90.10">
    <property type="entry name" value="Phospholipase A2 domain"/>
    <property type="match status" value="1"/>
</dbReference>
<dbReference type="InterPro" id="IPR001211">
    <property type="entry name" value="PLipase_A2"/>
</dbReference>
<dbReference type="InterPro" id="IPR033112">
    <property type="entry name" value="PLipase_A2_Asp_AS"/>
</dbReference>
<dbReference type="InterPro" id="IPR016090">
    <property type="entry name" value="PLipase_A2_dom"/>
</dbReference>
<dbReference type="InterPro" id="IPR036444">
    <property type="entry name" value="PLipase_A2_dom_sf"/>
</dbReference>
<dbReference type="InterPro" id="IPR033113">
    <property type="entry name" value="PLipase_A2_His_AS"/>
</dbReference>
<dbReference type="PANTHER" id="PTHR11716">
    <property type="entry name" value="PHOSPHOLIPASE A2 FAMILY MEMBER"/>
    <property type="match status" value="1"/>
</dbReference>
<dbReference type="PANTHER" id="PTHR11716:SF9">
    <property type="entry name" value="PHOSPHOLIPASE A2, MEMBRANE ASSOCIATED"/>
    <property type="match status" value="1"/>
</dbReference>
<dbReference type="Pfam" id="PF00068">
    <property type="entry name" value="Phospholip_A2_1"/>
    <property type="match status" value="1"/>
</dbReference>
<dbReference type="PRINTS" id="PR00389">
    <property type="entry name" value="PHPHLIPASEA2"/>
</dbReference>
<dbReference type="SMART" id="SM00085">
    <property type="entry name" value="PA2c"/>
    <property type="match status" value="1"/>
</dbReference>
<dbReference type="SUPFAM" id="SSF48619">
    <property type="entry name" value="Phospholipase A2, PLA2"/>
    <property type="match status" value="1"/>
</dbReference>
<dbReference type="PROSITE" id="PS00119">
    <property type="entry name" value="PA2_ASP"/>
    <property type="match status" value="1"/>
</dbReference>
<dbReference type="PROSITE" id="PS00118">
    <property type="entry name" value="PA2_HIS"/>
    <property type="match status" value="1"/>
</dbReference>
<comment type="function">
    <text evidence="1 3 5 8">Snake venom phospholipase A2 (PLA2) that lacks enzymatic activity (PubMed:10860537). Is myotoxic and displays edema-inducing activity (PubMed:10860537, PubMed:9972319). Displays bactericidal activity and promotes the blockage of the neuromuscular contraction of the chick biventer cervicis muscle (PubMed:10860537, PubMed:9972319). Also disrupts artificial membranes, and provokes tissue damages characterized by edema, necrosis and inflammation (PubMed:10860537, PubMed:9972319). May act as pro-inflammatory mediators, inducing metalloproteinase and cytokine production from the inflammatory and satellite cells (PubMed:19673103). A model of myotoxic mechanism has been proposed: an apo Lys49-PLA2 is activated by the entrance of a hydrophobic molecule (e.g. fatty acid) at the hydrophobic channel of the protein leading to a reorientation of a monomer (By similarity). This reorientation causes a transition between 'inactive' to 'active' states, causing alignment of C-terminal and membrane-docking sites (MDoS) side-by-side and putting the membrane-disruption sites (MDiS) in the same plane, exposed to solvent and in a symmetric position for both monomers (By similarity). The MDoS region stabilizes the toxin on membrane by the interaction of charged residues with phospholipid head groups (By similarity). Subsequently, the MDiS region destabilizes the membrane with penetration of hydrophobic residues (By similarity). This insertion causes a disorganization of the membrane, allowing an uncontrolled influx of ions (i.e. calcium and sodium), and eventually triggering irreversible intracellular alterations and cell death (By similarity).</text>
</comment>
<comment type="activity regulation">
    <text evidence="3">Heparin inhibits the neuromuscular effect, myotoxin activity and edema-inducing effects (PubMed:10860537). Bromophenacyl bromide (BPB) inhibits the neuromuscular effect, the myotoxin activity and edema-inducing effects (PubMed:10860537).</text>
</comment>
<comment type="subunit">
    <text evidence="4 7">Homodimer; non-covalently linked (probable alternative/compact dimer conformation in solution).</text>
</comment>
<comment type="subcellular location">
    <subcellularLocation>
        <location evidence="3">Secreted</location>
    </subcellularLocation>
</comment>
<comment type="tissue specificity">
    <text evidence="13">Expressed by the venom gland.</text>
</comment>
<comment type="toxic dose">
    <text evidence="3 8">LD(50) is 7.8 mg/kg by intraperitoneal injection into mice (PubMed:10860537). LD(50) is 7.75 mg/kg by intraperitoneal injection into mice (PubMed:9972319).</text>
</comment>
<comment type="similarity">
    <text evidence="12">Belongs to the phospholipase A2 family. Group II subfamily. K49 sub-subfamily.</text>
</comment>
<comment type="caution">
    <text evidence="12">Does not bind calcium as one of the calcium-binding sites is lost (Asp-&gt;Lys in position 48, which corresponds to 'Lys-49' in the current nomenclature).</text>
</comment>
<proteinExistence type="evidence at protein level"/>
<sequence length="121" mass="13727">SLFELGKMILQETGKNPAKSYGAYGCNCGVLGRGQPKDATDRCCYVHKCCYKKLTGCDPKKDRYSYSWKDKTIVCGENNPCLKELCECDKAVAICLRENLGTYNKKYRYHLKPFCKKADPC</sequence>
<name>PA2H_BOTPA</name>
<keyword id="KW-0002">3D-structure</keyword>
<keyword id="KW-0044">Antibiotic</keyword>
<keyword id="KW-0929">Antimicrobial</keyword>
<keyword id="KW-0903">Direct protein sequencing</keyword>
<keyword id="KW-1015">Disulfide bond</keyword>
<keyword id="KW-0959">Myotoxin</keyword>
<keyword id="KW-0528">Neurotoxin</keyword>
<keyword id="KW-0964">Secreted</keyword>
<keyword id="KW-0800">Toxin</keyword>
<reference key="1">
    <citation type="journal article" date="2000" name="Arch. Biochem. Biophys.">
        <title>Structural and functional characterization of BnSP-7, a Lys49 myotoxic phospholipase A(2) homologue from Bothrops neuwiedi pauloensis venom.</title>
        <authorList>
            <person name="Soares A.M."/>
            <person name="Guerra-Sa R."/>
            <person name="Borja-Oliveira C.R."/>
            <person name="Rodrigues V.M."/>
            <person name="Rodrigues-Simioni L."/>
            <person name="Rodrigues V."/>
            <person name="Fontes M.R.M."/>
            <person name="Lomonte B."/>
            <person name="Gutierrez J.M."/>
            <person name="Giglio J.R."/>
        </authorList>
    </citation>
    <scope>NUCLEOTIDE SEQUENCE [MRNA] OF 3-121</scope>
    <scope>PROTEIN SEQUENCE OF 1-40</scope>
    <scope>FUNCTION</scope>
    <scope>TOXIC DOSE</scope>
    <scope>SUBCELLULAR LOCATION</scope>
    <source>
        <tissue>Venom gland</tissue>
    </source>
</reference>
<reference key="2">
    <citation type="journal article" date="2012" name="J. Proteomics">
        <title>Combined snake venomics and venom gland transcriptomic analysis of Bothropoides pauloensis.</title>
        <authorList>
            <person name="Rodrigues R.S."/>
            <person name="Boldrini-Franca J."/>
            <person name="Fonseca F.P."/>
            <person name="de la Torre P."/>
            <person name="Henrique-Silva F."/>
            <person name="Sanz L."/>
            <person name="Calvete J.J."/>
            <person name="Rodrigues V.M."/>
        </authorList>
    </citation>
    <scope>PROTEIN SEQUENCE OF 1-30</scope>
    <scope>IDENTIFICATION BY MASS SPECTROMETRY</scope>
    <source>
        <tissue>Venom</tissue>
    </source>
</reference>
<reference key="3">
    <citation type="journal article" date="1998" name="Comp. Biochem. Physiol.">
        <title>Geographic variations in the composition of myotoxins from Bothrops neuwiedi snake venoms: biochemical characterization and biological activity.</title>
        <authorList>
            <person name="Rodrigues V.M."/>
            <person name="Soares A.M."/>
            <person name="Mancin A.C."/>
            <person name="Fontes M.R.M."/>
            <person name="Homsi-Brandeburgo M.I."/>
            <person name="Giglio J.R."/>
        </authorList>
    </citation>
    <scope>FUNCTION</scope>
    <scope>TOXIC DOSE</scope>
    <scope>AMINO ACID COMPOSITION</scope>
    <source>
        <tissue>Venom</tissue>
    </source>
</reference>
<reference key="4">
    <citation type="journal article" date="2009" name="Toxicon">
        <title>Insights of local tissue damage and regeneration induced by BnSP-7, a myotoxin isolated from Bothrops (neuwiedi) pauloensis snake venom.</title>
        <authorList>
            <person name="De Freitas Oliveira C."/>
            <person name="Da Silva Lopes D."/>
            <person name="Mendes M.M."/>
            <person name="Homsi-Brandeburgo M.I."/>
            <person name="Hamaguchi A."/>
            <person name="de Alcantara T.M."/>
            <person name="Clissa P.B."/>
            <person name="Rodrigues V.D.M."/>
        </authorList>
    </citation>
    <scope>FUNCTION</scope>
    <source>
        <tissue>Venom</tissue>
    </source>
</reference>
<reference key="5">
    <citation type="journal article" date="1999" name="Biochim. Biophys. Acta">
        <title>Crystallization and preliminary X-ray diffraction analysis of a myotoxic phospholipase A(2) homologue from Bothrops neuwiedi pauloensis venom.</title>
        <authorList>
            <person name="Fontes M.R.M."/>
            <person name="Soares A.M."/>
            <person name="Rodrigues V.M."/>
            <person name="Fernandes A.C."/>
            <person name="Da Silva R.J."/>
            <person name="Giglio J.R."/>
        </authorList>
    </citation>
    <scope>CRYSTALLIZATION</scope>
    <source>
        <tissue>Venom</tissue>
    </source>
</reference>
<reference evidence="15 16" key="6">
    <citation type="journal article" date="2003" name="Biochem. Biophys. Res. Commun.">
        <title>Crystal structures of BnSP-7 and BnSP-6, two Lys49-phospholipases A2: quaternary structure and inhibition mechanism insights.</title>
        <authorList>
            <person name="Magro A.J."/>
            <person name="Soares A.M."/>
            <person name="Giglio J.R."/>
            <person name="Fontes M.R.M."/>
        </authorList>
    </citation>
    <scope>X-RAY CRYSTALLOGRAPHY (2.2 ANGSTROMS)</scope>
    <scope>SUBUNIT</scope>
    <scope>DISULFIDE BONDS</scope>
</reference>
<reference evidence="17" key="7">
    <citation type="journal article" date="2011" name="Biochimie">
        <title>Crystal structure of Bn IV in complex with myristic acid: a Lys49 myotoxic phospholipase A(2) from Bothrops neuwiedi venom.</title>
        <authorList>
            <person name="Delatorre P."/>
            <person name="Rocha B.A."/>
            <person name="Santi-Gadelha T."/>
            <person name="Gadelha C.A."/>
            <person name="Toyama M.H."/>
            <person name="Cavada B.S."/>
        </authorList>
    </citation>
    <scope>X-RAY CRYSTALLOGRAPHY (2.21 ANGSTROMS) IN COMPLEX WITH MYRISTIC ACID</scope>
</reference>
<reference evidence="18 19 20 21" key="8">
    <citation type="journal article" date="2017" name="Biochimie">
        <title>Structural studies with BnSP-7 reveal an atypical oligomeric conformation compared to phospholipases A2-like toxins.</title>
        <authorList>
            <person name="de Lima L.F.G."/>
            <person name="Borges R.J."/>
            <person name="Viviescas M.A."/>
            <person name="Fernandes C.A.H."/>
            <person name="Fontes M.R.M."/>
        </authorList>
    </citation>
    <scope>X-RAY CRYSTALLOGRAPHY (1.59 ANGSTROMS) IN COMPLEX WITH 4'-HYDROXYCINNAMIC ACID; HYDROCINNAMIC ACID AND CAFFEIC ACID</scope>
    <source>
        <tissue>Venom</tissue>
    </source>
</reference>